<name>BGLG_EMENI</name>
<keyword id="KW-0119">Carbohydrate metabolism</keyword>
<keyword id="KW-0136">Cellulose degradation</keyword>
<keyword id="KW-0325">Glycoprotein</keyword>
<keyword id="KW-0326">Glycosidase</keyword>
<keyword id="KW-0378">Hydrolase</keyword>
<keyword id="KW-0624">Polysaccharide degradation</keyword>
<keyword id="KW-1185">Reference proteome</keyword>
<keyword id="KW-0964">Secreted</keyword>
<keyword id="KW-0732">Signal</keyword>
<feature type="signal peptide" evidence="2">
    <location>
        <begin position="1"/>
        <end position="20"/>
    </location>
</feature>
<feature type="chain" id="PRO_0000394119" description="Probable beta-glucosidase G">
    <location>
        <begin position="21"/>
        <end position="819"/>
    </location>
</feature>
<feature type="active site" evidence="1">
    <location>
        <position position="305"/>
    </location>
</feature>
<feature type="glycosylation site" description="N-linked (GlcNAc...) asparagine" evidence="2">
    <location>
        <position position="41"/>
    </location>
</feature>
<feature type="glycosylation site" description="N-linked (GlcNAc...) asparagine" evidence="2">
    <location>
        <position position="59"/>
    </location>
</feature>
<feature type="glycosylation site" description="N-linked (GlcNAc...) asparagine" evidence="2">
    <location>
        <position position="107"/>
    </location>
</feature>
<feature type="glycosylation site" description="N-linked (GlcNAc...) asparagine" evidence="2">
    <location>
        <position position="228"/>
    </location>
</feature>
<feature type="glycosylation site" description="N-linked (GlcNAc...) asparagine" evidence="2">
    <location>
        <position position="277"/>
    </location>
</feature>
<feature type="glycosylation site" description="N-linked (GlcNAc...) asparagine" evidence="2">
    <location>
        <position position="337"/>
    </location>
</feature>
<feature type="glycosylation site" description="N-linked (GlcNAc...) asparagine" evidence="2">
    <location>
        <position position="344"/>
    </location>
</feature>
<feature type="glycosylation site" description="N-linked (GlcNAc...) asparagine" evidence="2">
    <location>
        <position position="351"/>
    </location>
</feature>
<feature type="glycosylation site" description="N-linked (GlcNAc...) asparagine" evidence="2">
    <location>
        <position position="403"/>
    </location>
</feature>
<feature type="glycosylation site" description="N-linked (GlcNAc...) asparagine" evidence="2">
    <location>
        <position position="500"/>
    </location>
</feature>
<feature type="glycosylation site" description="N-linked (GlcNAc...) asparagine" evidence="2">
    <location>
        <position position="509"/>
    </location>
</feature>
<feature type="glycosylation site" description="N-linked (GlcNAc...) asparagine" evidence="2">
    <location>
        <position position="554"/>
    </location>
</feature>
<feature type="glycosylation site" description="N-linked (GlcNAc...) asparagine" evidence="2">
    <location>
        <position position="567"/>
    </location>
</feature>
<feature type="glycosylation site" description="N-linked (GlcNAc...) asparagine" evidence="2">
    <location>
        <position position="588"/>
    </location>
</feature>
<feature type="glycosylation site" description="N-linked (GlcNAc...) asparagine" evidence="2">
    <location>
        <position position="627"/>
    </location>
</feature>
<feature type="glycosylation site" description="N-linked (GlcNAc...) asparagine" evidence="2">
    <location>
        <position position="683"/>
    </location>
</feature>
<feature type="glycosylation site" description="N-linked (GlcNAc...) asparagine" evidence="2">
    <location>
        <position position="719"/>
    </location>
</feature>
<accession>Q5B0F4</accession>
<accession>C8V3B8</accession>
<sequence>MTSASQILVWGLLAASGAQAQNYGGGSSRSDDAFSYVQPKNTTILGAYGHSPAVYPSPNTTGSGGWETALAQAQDFVAQLTLEEKANMVTGQPGPCVGNIIAIPRLNFSGLCLQDGPLAIRVTDMASVFSAGVTAAASWDRKILYERGYAMGQEFKAKGAHVALGPVAGPLGRSAYSGRNWEGFAADPYLTGVAMEETIQGYQDAGVQACPKHFIGNEQETMRNPTFNDSAPLGTVIQEAVSSNIDDRTMHELYLWPFANAVHAKAASIMCSYQRINGSYGCENSKTLNGLLKGELGFQGYVMSDWGATHSGVAGIKSGQDMDMPGGLGAYGQTFINRSFFGGNVTAAVNNGTLEESRIDDMILRIMTPYFWLGQDQDYPTVDPSTADYNTFSPRNTWYQDFNLTGERSRDVRGNHAALIRKQAAEATVLLKNKNNALPLKAPKTLAVFGNDASDITNGPYNDATYEYGTLAAGGGSGTGRFTYLVSPLTAINARAQKDNTSLVQFWLNNTQIATSDVQADLLRVPTPPTACLVFVKTWAEEGADREHLRLDYNGTEVVEAVAAACNNTIVVTHSSGINELPFANHPNVTAILAAHFPGQESGNSIVDVLYGDVNPSGRLPYTIARNGSDYNAPPTTAVTTSGREDWQSWFDEKLEIDYRYFDAHNIPVLYEFGFGLSYTTFNISDIYATRVVDSITSAPEDRAIQPGGNPELWETIYNVTVSVTNTGDVEGATVPQLYVTFPDSTPEGTPPKQLRGFDKVSLQPGESTKVIFELMRRDLSYWDTVSQQWLIPEGDFTIRVGFSSRNLKEVTTITPVSE</sequence>
<dbReference type="EC" id="3.2.1.21"/>
<dbReference type="EMBL" id="AACD01000102">
    <property type="protein sequence ID" value="EAA57725.1"/>
    <property type="status" value="ALT_INIT"/>
    <property type="molecule type" value="Genomic_DNA"/>
</dbReference>
<dbReference type="EMBL" id="BN001301">
    <property type="protein sequence ID" value="CBF70434.1"/>
    <property type="status" value="ALT_INIT"/>
    <property type="molecule type" value="Genomic_DNA"/>
</dbReference>
<dbReference type="RefSeq" id="XP_663580.1">
    <property type="nucleotide sequence ID" value="XM_658488.1"/>
</dbReference>
<dbReference type="SMR" id="Q5B0F4"/>
<dbReference type="STRING" id="227321.Q5B0F4"/>
<dbReference type="CAZy" id="GH3">
    <property type="family name" value="Glycoside Hydrolase Family 3"/>
</dbReference>
<dbReference type="GlyCosmos" id="Q5B0F4">
    <property type="glycosylation" value="17 sites, No reported glycans"/>
</dbReference>
<dbReference type="KEGG" id="ani:ANIA_05976"/>
<dbReference type="VEuPathDB" id="FungiDB:AN5976"/>
<dbReference type="eggNOG" id="ENOG502QR4D">
    <property type="taxonomic scope" value="Eukaryota"/>
</dbReference>
<dbReference type="HOGENOM" id="CLU_004542_2_3_1"/>
<dbReference type="InParanoid" id="Q5B0F4"/>
<dbReference type="OrthoDB" id="416222at2759"/>
<dbReference type="UniPathway" id="UPA00696"/>
<dbReference type="Proteomes" id="UP000000560">
    <property type="component" value="Chromosome I"/>
</dbReference>
<dbReference type="GO" id="GO:0005576">
    <property type="term" value="C:extracellular region"/>
    <property type="evidence" value="ECO:0007669"/>
    <property type="project" value="UniProtKB-SubCell"/>
</dbReference>
<dbReference type="GO" id="GO:0008422">
    <property type="term" value="F:beta-glucosidase activity"/>
    <property type="evidence" value="ECO:0000318"/>
    <property type="project" value="GO_Central"/>
</dbReference>
<dbReference type="GO" id="GO:0030245">
    <property type="term" value="P:cellulose catabolic process"/>
    <property type="evidence" value="ECO:0007669"/>
    <property type="project" value="UniProtKB-UniPathway"/>
</dbReference>
<dbReference type="GO" id="GO:0009251">
    <property type="term" value="P:glucan catabolic process"/>
    <property type="evidence" value="ECO:0000318"/>
    <property type="project" value="GO_Central"/>
</dbReference>
<dbReference type="FunFam" id="2.60.40.10:FF:000757">
    <property type="entry name" value="Beta-glucosidase G"/>
    <property type="match status" value="1"/>
</dbReference>
<dbReference type="FunFam" id="3.20.20.300:FF:000002">
    <property type="entry name" value="Probable beta-glucosidase"/>
    <property type="match status" value="1"/>
</dbReference>
<dbReference type="FunFam" id="3.40.50.1700:FF:000003">
    <property type="entry name" value="Probable beta-glucosidase"/>
    <property type="match status" value="1"/>
</dbReference>
<dbReference type="Gene3D" id="3.40.50.1700">
    <property type="entry name" value="Glycoside hydrolase family 3 C-terminal domain"/>
    <property type="match status" value="1"/>
</dbReference>
<dbReference type="Gene3D" id="3.20.20.300">
    <property type="entry name" value="Glycoside hydrolase, family 3, N-terminal domain"/>
    <property type="match status" value="1"/>
</dbReference>
<dbReference type="Gene3D" id="2.60.40.10">
    <property type="entry name" value="Immunoglobulins"/>
    <property type="match status" value="1"/>
</dbReference>
<dbReference type="InterPro" id="IPR050288">
    <property type="entry name" value="Cellulose_deg_GH3"/>
</dbReference>
<dbReference type="InterPro" id="IPR026891">
    <property type="entry name" value="Fn3-like"/>
</dbReference>
<dbReference type="InterPro" id="IPR002772">
    <property type="entry name" value="Glyco_hydro_3_C"/>
</dbReference>
<dbReference type="InterPro" id="IPR036881">
    <property type="entry name" value="Glyco_hydro_3_C_sf"/>
</dbReference>
<dbReference type="InterPro" id="IPR001764">
    <property type="entry name" value="Glyco_hydro_3_N"/>
</dbReference>
<dbReference type="InterPro" id="IPR036962">
    <property type="entry name" value="Glyco_hydro_3_N_sf"/>
</dbReference>
<dbReference type="InterPro" id="IPR017853">
    <property type="entry name" value="Glycoside_hydrolase_SF"/>
</dbReference>
<dbReference type="InterPro" id="IPR013783">
    <property type="entry name" value="Ig-like_fold"/>
</dbReference>
<dbReference type="PANTHER" id="PTHR42715">
    <property type="entry name" value="BETA-GLUCOSIDASE"/>
    <property type="match status" value="1"/>
</dbReference>
<dbReference type="PANTHER" id="PTHR42715:SF12">
    <property type="entry name" value="BETA-GLUCOSIDASE G-RELATED"/>
    <property type="match status" value="1"/>
</dbReference>
<dbReference type="Pfam" id="PF14310">
    <property type="entry name" value="Fn3-like"/>
    <property type="match status" value="1"/>
</dbReference>
<dbReference type="Pfam" id="PF00933">
    <property type="entry name" value="Glyco_hydro_3"/>
    <property type="match status" value="1"/>
</dbReference>
<dbReference type="Pfam" id="PF01915">
    <property type="entry name" value="Glyco_hydro_3_C"/>
    <property type="match status" value="1"/>
</dbReference>
<dbReference type="PRINTS" id="PR00133">
    <property type="entry name" value="GLHYDRLASE3"/>
</dbReference>
<dbReference type="SMART" id="SM01217">
    <property type="entry name" value="Fn3_like"/>
    <property type="match status" value="1"/>
</dbReference>
<dbReference type="SUPFAM" id="SSF51445">
    <property type="entry name" value="(Trans)glycosidases"/>
    <property type="match status" value="1"/>
</dbReference>
<dbReference type="SUPFAM" id="SSF52279">
    <property type="entry name" value="Beta-D-glucan exohydrolase, C-terminal domain"/>
    <property type="match status" value="1"/>
</dbReference>
<reference key="1">
    <citation type="journal article" date="2005" name="Nature">
        <title>Sequencing of Aspergillus nidulans and comparative analysis with A. fumigatus and A. oryzae.</title>
        <authorList>
            <person name="Galagan J.E."/>
            <person name="Calvo S.E."/>
            <person name="Cuomo C."/>
            <person name="Ma L.-J."/>
            <person name="Wortman J.R."/>
            <person name="Batzoglou S."/>
            <person name="Lee S.-I."/>
            <person name="Bastuerkmen M."/>
            <person name="Spevak C.C."/>
            <person name="Clutterbuck J."/>
            <person name="Kapitonov V."/>
            <person name="Jurka J."/>
            <person name="Scazzocchio C."/>
            <person name="Farman M.L."/>
            <person name="Butler J."/>
            <person name="Purcell S."/>
            <person name="Harris S."/>
            <person name="Braus G.H."/>
            <person name="Draht O."/>
            <person name="Busch S."/>
            <person name="D'Enfert C."/>
            <person name="Bouchier C."/>
            <person name="Goldman G.H."/>
            <person name="Bell-Pedersen D."/>
            <person name="Griffiths-Jones S."/>
            <person name="Doonan J.H."/>
            <person name="Yu J."/>
            <person name="Vienken K."/>
            <person name="Pain A."/>
            <person name="Freitag M."/>
            <person name="Selker E.U."/>
            <person name="Archer D.B."/>
            <person name="Penalva M.A."/>
            <person name="Oakley B.R."/>
            <person name="Momany M."/>
            <person name="Tanaka T."/>
            <person name="Kumagai T."/>
            <person name="Asai K."/>
            <person name="Machida M."/>
            <person name="Nierman W.C."/>
            <person name="Denning D.W."/>
            <person name="Caddick M.X."/>
            <person name="Hynes M."/>
            <person name="Paoletti M."/>
            <person name="Fischer R."/>
            <person name="Miller B.L."/>
            <person name="Dyer P.S."/>
            <person name="Sachs M.S."/>
            <person name="Osmani S.A."/>
            <person name="Birren B.W."/>
        </authorList>
    </citation>
    <scope>NUCLEOTIDE SEQUENCE [LARGE SCALE GENOMIC DNA]</scope>
    <source>
        <strain>FGSC A4 / ATCC 38163 / CBS 112.46 / NRRL 194 / M139</strain>
    </source>
</reference>
<reference key="2">
    <citation type="journal article" date="2009" name="Fungal Genet. Biol.">
        <title>The 2008 update of the Aspergillus nidulans genome annotation: a community effort.</title>
        <authorList>
            <person name="Wortman J.R."/>
            <person name="Gilsenan J.M."/>
            <person name="Joardar V."/>
            <person name="Deegan J."/>
            <person name="Clutterbuck J."/>
            <person name="Andersen M.R."/>
            <person name="Archer D."/>
            <person name="Bencina M."/>
            <person name="Braus G."/>
            <person name="Coutinho P."/>
            <person name="von Dohren H."/>
            <person name="Doonan J."/>
            <person name="Driessen A.J."/>
            <person name="Durek P."/>
            <person name="Espeso E."/>
            <person name="Fekete E."/>
            <person name="Flipphi M."/>
            <person name="Estrada C.G."/>
            <person name="Geysens S."/>
            <person name="Goldman G."/>
            <person name="de Groot P.W."/>
            <person name="Hansen K."/>
            <person name="Harris S.D."/>
            <person name="Heinekamp T."/>
            <person name="Helmstaedt K."/>
            <person name="Henrissat B."/>
            <person name="Hofmann G."/>
            <person name="Homan T."/>
            <person name="Horio T."/>
            <person name="Horiuchi H."/>
            <person name="James S."/>
            <person name="Jones M."/>
            <person name="Karaffa L."/>
            <person name="Karanyi Z."/>
            <person name="Kato M."/>
            <person name="Keller N."/>
            <person name="Kelly D.E."/>
            <person name="Kiel J.A."/>
            <person name="Kim J.M."/>
            <person name="van der Klei I.J."/>
            <person name="Klis F.M."/>
            <person name="Kovalchuk A."/>
            <person name="Krasevec N."/>
            <person name="Kubicek C.P."/>
            <person name="Liu B."/>
            <person name="Maccabe A."/>
            <person name="Meyer V."/>
            <person name="Mirabito P."/>
            <person name="Miskei M."/>
            <person name="Mos M."/>
            <person name="Mullins J."/>
            <person name="Nelson D.R."/>
            <person name="Nielsen J."/>
            <person name="Oakley B.R."/>
            <person name="Osmani S.A."/>
            <person name="Pakula T."/>
            <person name="Paszewski A."/>
            <person name="Paulsen I."/>
            <person name="Pilsyk S."/>
            <person name="Pocsi I."/>
            <person name="Punt P.J."/>
            <person name="Ram A.F."/>
            <person name="Ren Q."/>
            <person name="Robellet X."/>
            <person name="Robson G."/>
            <person name="Seiboth B."/>
            <person name="van Solingen P."/>
            <person name="Specht T."/>
            <person name="Sun J."/>
            <person name="Taheri-Talesh N."/>
            <person name="Takeshita N."/>
            <person name="Ussery D."/>
            <person name="vanKuyk P.A."/>
            <person name="Visser H."/>
            <person name="van de Vondervoort P.J."/>
            <person name="de Vries R.P."/>
            <person name="Walton J."/>
            <person name="Xiang X."/>
            <person name="Xiong Y."/>
            <person name="Zeng A.P."/>
            <person name="Brandt B.W."/>
            <person name="Cornell M.J."/>
            <person name="van den Hondel C.A."/>
            <person name="Visser J."/>
            <person name="Oliver S.G."/>
            <person name="Turner G."/>
        </authorList>
    </citation>
    <scope>GENOME REANNOTATION</scope>
    <source>
        <strain>FGSC A4 / ATCC 38163 / CBS 112.46 / NRRL 194 / M139</strain>
    </source>
</reference>
<evidence type="ECO:0000250" key="1"/>
<evidence type="ECO:0000255" key="2"/>
<evidence type="ECO:0000305" key="3"/>
<gene>
    <name type="primary">bglG</name>
    <name type="ORF">AN5976</name>
</gene>
<protein>
    <recommendedName>
        <fullName>Probable beta-glucosidase G</fullName>
        <ecNumber>3.2.1.21</ecNumber>
    </recommendedName>
    <alternativeName>
        <fullName>Beta-D-glucoside glucohydrolase G</fullName>
    </alternativeName>
    <alternativeName>
        <fullName>Cellobiase G</fullName>
    </alternativeName>
    <alternativeName>
        <fullName>Gentiobiase G</fullName>
    </alternativeName>
</protein>
<proteinExistence type="inferred from homology"/>
<comment type="function">
    <text evidence="1">Beta-glucosidases are one of a number of cellulolytic enzymes involved in the degradation of cellulosic biomass. Catalyzes the last step releasing glucose from the inhibitory cellobiose (By similarity).</text>
</comment>
<comment type="catalytic activity">
    <reaction>
        <text>Hydrolysis of terminal, non-reducing beta-D-glucosyl residues with release of beta-D-glucose.</text>
        <dbReference type="EC" id="3.2.1.21"/>
    </reaction>
</comment>
<comment type="pathway">
    <text>Glycan metabolism; cellulose degradation.</text>
</comment>
<comment type="subcellular location">
    <subcellularLocation>
        <location evidence="1">Secreted</location>
    </subcellularLocation>
</comment>
<comment type="similarity">
    <text evidence="3">Belongs to the glycosyl hydrolase 3 family.</text>
</comment>
<comment type="sequence caution" evidence="3">
    <conflict type="erroneous initiation">
        <sequence resource="EMBL-CDS" id="CBF70434"/>
    </conflict>
    <text>Extended N-terminus.</text>
</comment>
<comment type="sequence caution" evidence="3">
    <conflict type="erroneous initiation">
        <sequence resource="EMBL-CDS" id="EAA57725"/>
    </conflict>
    <text>Extended N-terminus.</text>
</comment>
<organism>
    <name type="scientific">Emericella nidulans (strain FGSC A4 / ATCC 38163 / CBS 112.46 / NRRL 194 / M139)</name>
    <name type="common">Aspergillus nidulans</name>
    <dbReference type="NCBI Taxonomy" id="227321"/>
    <lineage>
        <taxon>Eukaryota</taxon>
        <taxon>Fungi</taxon>
        <taxon>Dikarya</taxon>
        <taxon>Ascomycota</taxon>
        <taxon>Pezizomycotina</taxon>
        <taxon>Eurotiomycetes</taxon>
        <taxon>Eurotiomycetidae</taxon>
        <taxon>Eurotiales</taxon>
        <taxon>Aspergillaceae</taxon>
        <taxon>Aspergillus</taxon>
        <taxon>Aspergillus subgen. Nidulantes</taxon>
    </lineage>
</organism>